<keyword id="KW-0131">Cell cycle</keyword>
<keyword id="KW-0132">Cell division</keyword>
<keyword id="KW-0137">Centromere</keyword>
<keyword id="KW-0158">Chromosome</keyword>
<keyword id="KW-0159">Chromosome partition</keyword>
<keyword id="KW-0175">Coiled coil</keyword>
<keyword id="KW-0469">Meiosis</keyword>
<keyword id="KW-0539">Nucleus</keyword>
<keyword id="KW-1185">Reference proteome</keyword>
<feature type="chain" id="PRO_0000444506" description="Shugoshin-1">
    <location>
        <begin position="1"/>
        <end position="486"/>
    </location>
</feature>
<feature type="region of interest" description="Disordered" evidence="2">
    <location>
        <begin position="137"/>
        <end position="163"/>
    </location>
</feature>
<feature type="region of interest" description="Disordered" evidence="2">
    <location>
        <begin position="187"/>
        <end position="209"/>
    </location>
</feature>
<feature type="region of interest" description="Disordered" evidence="2">
    <location>
        <begin position="222"/>
        <end position="251"/>
    </location>
</feature>
<feature type="region of interest" description="Disordered" evidence="2">
    <location>
        <begin position="323"/>
        <end position="346"/>
    </location>
</feature>
<feature type="region of interest" description="Disordered" evidence="2">
    <location>
        <begin position="382"/>
        <end position="403"/>
    </location>
</feature>
<feature type="region of interest" description="Disordered" evidence="2">
    <location>
        <begin position="418"/>
        <end position="467"/>
    </location>
</feature>
<feature type="coiled-coil region" evidence="1">
    <location>
        <begin position="71"/>
        <end position="154"/>
    </location>
</feature>
<feature type="compositionally biased region" description="Basic and acidic residues" evidence="2">
    <location>
        <begin position="331"/>
        <end position="346"/>
    </location>
</feature>
<feature type="compositionally biased region" description="Basic residues" evidence="2">
    <location>
        <begin position="387"/>
        <end position="396"/>
    </location>
</feature>
<feature type="compositionally biased region" description="Polar residues" evidence="2">
    <location>
        <begin position="423"/>
        <end position="433"/>
    </location>
</feature>
<organism>
    <name type="scientific">Oryza sativa subsp. japonica</name>
    <name type="common">Rice</name>
    <dbReference type="NCBI Taxonomy" id="39947"/>
    <lineage>
        <taxon>Eukaryota</taxon>
        <taxon>Viridiplantae</taxon>
        <taxon>Streptophyta</taxon>
        <taxon>Embryophyta</taxon>
        <taxon>Tracheophyta</taxon>
        <taxon>Spermatophyta</taxon>
        <taxon>Magnoliopsida</taxon>
        <taxon>Liliopsida</taxon>
        <taxon>Poales</taxon>
        <taxon>Poaceae</taxon>
        <taxon>BOP clade</taxon>
        <taxon>Oryzoideae</taxon>
        <taxon>Oryzeae</taxon>
        <taxon>Oryzinae</taxon>
        <taxon>Oryza</taxon>
        <taxon>Oryza sativa</taxon>
    </lineage>
</organism>
<gene>
    <name evidence="4" type="primary">SGO1</name>
    <name evidence="7" type="ordered locus">Os02g0799100</name>
    <name evidence="5" type="ordered locus">LOC_Os02g55570</name>
    <name evidence="6" type="ORF">OJ1695_D07.19</name>
</gene>
<dbReference type="EMBL" id="HQ333477">
    <property type="protein sequence ID" value="ADO32586.1"/>
    <property type="molecule type" value="mRNA"/>
</dbReference>
<dbReference type="EMBL" id="AP005295">
    <property type="protein sequence ID" value="BAD36062.1"/>
    <property type="status" value="ALT_SEQ"/>
    <property type="molecule type" value="Genomic_DNA"/>
</dbReference>
<dbReference type="EMBL" id="AP008208">
    <property type="protein sequence ID" value="BAH91911.1"/>
    <property type="status" value="ALT_SEQ"/>
    <property type="molecule type" value="Genomic_DNA"/>
</dbReference>
<dbReference type="EMBL" id="AP014958">
    <property type="protein sequence ID" value="BAS81391.1"/>
    <property type="status" value="ALT_SEQ"/>
    <property type="molecule type" value="Genomic_DNA"/>
</dbReference>
<dbReference type="RefSeq" id="XP_015626584.1">
    <property type="nucleotide sequence ID" value="XM_015771098.1"/>
</dbReference>
<dbReference type="RefSeq" id="XP_015626586.1">
    <property type="nucleotide sequence ID" value="XM_015771100.1"/>
</dbReference>
<dbReference type="SMR" id="E3VXF2"/>
<dbReference type="FunCoup" id="E3VXF2">
    <property type="interactions" value="70"/>
</dbReference>
<dbReference type="STRING" id="39947.E3VXF2"/>
<dbReference type="PaxDb" id="39947-E3VXF2"/>
<dbReference type="EnsemblPlants" id="Os02t0799100-02">
    <property type="protein sequence ID" value="Os02t0799100-02"/>
    <property type="gene ID" value="Os02g0799100"/>
</dbReference>
<dbReference type="Gramene" id="Os02t0799100-02">
    <property type="protein sequence ID" value="Os02t0799100-02"/>
    <property type="gene ID" value="Os02g0799100"/>
</dbReference>
<dbReference type="KEGG" id="dosa:Os02g0799100"/>
<dbReference type="eggNOG" id="ENOG502RYDC">
    <property type="taxonomic scope" value="Eukaryota"/>
</dbReference>
<dbReference type="HOGENOM" id="CLU_028640_1_0_1"/>
<dbReference type="InParanoid" id="E3VXF2"/>
<dbReference type="OrthoDB" id="770508at2759"/>
<dbReference type="Proteomes" id="UP000000763">
    <property type="component" value="Chromosome 2"/>
</dbReference>
<dbReference type="Proteomes" id="UP000059680">
    <property type="component" value="Chromosome 2"/>
</dbReference>
<dbReference type="GO" id="GO:0000775">
    <property type="term" value="C:chromosome, centromeric region"/>
    <property type="evidence" value="ECO:0000314"/>
    <property type="project" value="UniProtKB"/>
</dbReference>
<dbReference type="GO" id="GO:0005730">
    <property type="term" value="C:nucleolus"/>
    <property type="evidence" value="ECO:0000314"/>
    <property type="project" value="UniProtKB"/>
</dbReference>
<dbReference type="GO" id="GO:0051301">
    <property type="term" value="P:cell division"/>
    <property type="evidence" value="ECO:0007669"/>
    <property type="project" value="UniProtKB-KW"/>
</dbReference>
<dbReference type="GO" id="GO:0034090">
    <property type="term" value="P:maintenance of meiotic sister chromatid cohesion"/>
    <property type="evidence" value="ECO:0007669"/>
    <property type="project" value="InterPro"/>
</dbReference>
<dbReference type="GO" id="GO:0045144">
    <property type="term" value="P:meiotic sister chromatid segregation"/>
    <property type="evidence" value="ECO:0000315"/>
    <property type="project" value="UniProtKB"/>
</dbReference>
<dbReference type="InterPro" id="IPR044693">
    <property type="entry name" value="SGO_plant"/>
</dbReference>
<dbReference type="InterPro" id="IPR011515">
    <property type="entry name" value="Shugoshin_C"/>
</dbReference>
<dbReference type="PANTHER" id="PTHR34373">
    <property type="entry name" value="SHUGOSHIN 2"/>
    <property type="match status" value="1"/>
</dbReference>
<dbReference type="PANTHER" id="PTHR34373:SF16">
    <property type="entry name" value="SHUGOSHIN-1"/>
    <property type="match status" value="1"/>
</dbReference>
<dbReference type="Pfam" id="PF07557">
    <property type="entry name" value="Shugoshin_C"/>
    <property type="match status" value="1"/>
</dbReference>
<proteinExistence type="evidence at transcript level"/>
<name>SGO1_ORYSJ</name>
<accession>E3VXF2</accession>
<accession>A0A0P0VR49</accession>
<accession>C7IZ57</accession>
<accession>Q69QY9</accession>
<protein>
    <recommendedName>
        <fullName evidence="4">Shugoshin-1</fullName>
        <shortName evidence="4">OsSGO1</shortName>
    </recommendedName>
</protein>
<comment type="function">
    <text evidence="3">Plays a central role in chromosome cohesion during meiosis I by preventing premature dissociation of cohesin complex from centromeres after prophase, when most of cohesin complex dissociates from chromosomes arms. Required for the timely assembly and maintenance of synaptonemal complex (SC) during early prophase I. Required for maintenance of centromeric cohesion before prophase II and correct segregation of chromatids during meiosis II. Has apparently no function in mitosis.</text>
</comment>
<comment type="subcellular location">
    <subcellularLocation>
        <location evidence="3">Nucleus</location>
        <location evidence="3">Nucleolus</location>
    </subcellularLocation>
    <subcellularLocation>
        <location evidence="3">Chromosome</location>
        <location evidence="3">Centromere</location>
    </subcellularLocation>
    <text evidence="3">Transfers from nucleoli onto centromeric regions at the onset of prophase in both mitosis and meiosis. AM1 is required for centromeric localization.</text>
</comment>
<comment type="tissue specificity">
    <text evidence="3">Highly expressed in roots. Expressed in panicles. Expressed at low levels in leaves.</text>
</comment>
<comment type="disruption phenotype">
    <text evidence="3">Complete sterility, due to shrunken and inviable pollen grains. Premature separation of sister chromatids before metaphase II causes defective meiosis of the male meiocyte.</text>
</comment>
<comment type="similarity">
    <text evidence="5">Belongs to the shugoshin family.</text>
</comment>
<comment type="sequence caution" evidence="5">
    <conflict type="erroneous gene model prediction">
        <sequence resource="EMBL-CDS" id="BAD36062"/>
    </conflict>
</comment>
<comment type="sequence caution" evidence="5">
    <conflict type="erroneous gene model prediction">
        <sequence resource="EMBL-CDS" id="BAH91911"/>
    </conflict>
</comment>
<comment type="sequence caution" evidence="5">
    <conflict type="erroneous gene model prediction">
        <sequence resource="EMBL-CDS" id="BAS81391"/>
    </conflict>
</comment>
<evidence type="ECO:0000255" key="1"/>
<evidence type="ECO:0000256" key="2">
    <source>
        <dbReference type="SAM" id="MobiDB-lite"/>
    </source>
</evidence>
<evidence type="ECO:0000269" key="3">
    <source>
    </source>
</evidence>
<evidence type="ECO:0000303" key="4">
    <source>
    </source>
</evidence>
<evidence type="ECO:0000305" key="5"/>
<evidence type="ECO:0000312" key="6">
    <source>
        <dbReference type="EMBL" id="BAD36062.1"/>
    </source>
</evidence>
<evidence type="ECO:0000312" key="7">
    <source>
        <dbReference type="EMBL" id="BAS81391.1"/>
    </source>
</evidence>
<sequence>MAAAAGAAARGGGVIPAGKGGSLRSPGKPVVLADITNTGRPNPTGSVHAIADVLKENAKLRHLLAERNKVIEVSRVELQKIRLALQAMQQKNLQLVQANSQMFAEINQGKDRIKLLQHELACTIAVLKVKGSELEKMSKTSNNQQNRAKILEKKTRSSKCAPTKAHQMAAGSIREHLVEIQSAVPSYTSCHEPPQDKTNKRCTNRRKSESCEVTMDTNTVQHSCRPHVEYNGSSHDDDPRKTRRRRSARLNPGSFEVAEICDKLHEDATVPSAPSSNVPKLQEPNAGKDMICGGKMKSLQKELPCDAIAQVVEAPELKEIQEAGSSVAGGEAHKFDIEDPEPPRKSMRIDANKRKLESFESRLASNKEDCINAICDSTSSVPIQHEQKRKLSRRKSSRLDPGPWEVTNGTFEIVQEDTVAPSAPSSSNALIEQTKNDMQNDRSCSTKPSDEQVIGRRSSVGRPSRRAAEKIVSYKEVPLNIKMRRP</sequence>
<reference key="1">
    <citation type="journal article" date="2011" name="Plant J.">
        <title>OsSGO1 maintains synaptonemal complex stabilization in addition to protecting centromeric cohesion during rice meiosis.</title>
        <authorList>
            <person name="Wang M."/>
            <person name="Tang D."/>
            <person name="Wang K."/>
            <person name="Shen Y."/>
            <person name="Qin B."/>
            <person name="Miao C."/>
            <person name="Li M."/>
            <person name="Cheng Z."/>
        </authorList>
    </citation>
    <scope>NUCLEOTIDE SEQUENCE [MRNA]</scope>
    <scope>FUNCTION</scope>
    <scope>SUBCELLULAR LOCATION</scope>
    <scope>TISSUE SPECIFICITY</scope>
    <scope>DISRUPTION PHENOTYPE</scope>
</reference>
<reference key="2">
    <citation type="journal article" date="2005" name="Nature">
        <title>The map-based sequence of the rice genome.</title>
        <authorList>
            <consortium name="International rice genome sequencing project (IRGSP)"/>
        </authorList>
    </citation>
    <scope>NUCLEOTIDE SEQUENCE [LARGE SCALE GENOMIC DNA]</scope>
    <source>
        <strain>cv. Nipponbare</strain>
    </source>
</reference>
<reference key="3">
    <citation type="journal article" date="2008" name="Nucleic Acids Res.">
        <title>The rice annotation project database (RAP-DB): 2008 update.</title>
        <authorList>
            <consortium name="The rice annotation project (RAP)"/>
        </authorList>
    </citation>
    <scope>GENOME REANNOTATION</scope>
    <source>
        <strain>cv. Nipponbare</strain>
    </source>
</reference>
<reference key="4">
    <citation type="journal article" date="2013" name="Rice">
        <title>Improvement of the Oryza sativa Nipponbare reference genome using next generation sequence and optical map data.</title>
        <authorList>
            <person name="Kawahara Y."/>
            <person name="de la Bastide M."/>
            <person name="Hamilton J.P."/>
            <person name="Kanamori H."/>
            <person name="McCombie W.R."/>
            <person name="Ouyang S."/>
            <person name="Schwartz D.C."/>
            <person name="Tanaka T."/>
            <person name="Wu J."/>
            <person name="Zhou S."/>
            <person name="Childs K.L."/>
            <person name="Davidson R.M."/>
            <person name="Lin H."/>
            <person name="Quesada-Ocampo L."/>
            <person name="Vaillancourt B."/>
            <person name="Sakai H."/>
            <person name="Lee S.S."/>
            <person name="Kim J."/>
            <person name="Numa H."/>
            <person name="Itoh T."/>
            <person name="Buell C.R."/>
            <person name="Matsumoto T."/>
        </authorList>
    </citation>
    <scope>GENOME REANNOTATION</scope>
    <source>
        <strain>cv. Nipponbare</strain>
    </source>
</reference>